<reference key="1">
    <citation type="journal article" date="1997" name="Science">
        <title>The complete genome sequence of Escherichia coli K-12.</title>
        <authorList>
            <person name="Blattner F.R."/>
            <person name="Plunkett G. III"/>
            <person name="Bloch C.A."/>
            <person name="Perna N.T."/>
            <person name="Burland V."/>
            <person name="Riley M."/>
            <person name="Collado-Vides J."/>
            <person name="Glasner J.D."/>
            <person name="Rode C.K."/>
            <person name="Mayhew G.F."/>
            <person name="Gregor J."/>
            <person name="Davis N.W."/>
            <person name="Kirkpatrick H.A."/>
            <person name="Goeden M.A."/>
            <person name="Rose D.J."/>
            <person name="Mau B."/>
            <person name="Shao Y."/>
        </authorList>
    </citation>
    <scope>NUCLEOTIDE SEQUENCE [LARGE SCALE GENOMIC DNA]</scope>
    <source>
        <strain>K12 / MG1655 / ATCC 47076</strain>
    </source>
</reference>
<reference key="2">
    <citation type="journal article" date="2006" name="Mol. Syst. Biol.">
        <title>Highly accurate genome sequences of Escherichia coli K-12 strains MG1655 and W3110.</title>
        <authorList>
            <person name="Hayashi K."/>
            <person name="Morooka N."/>
            <person name="Yamamoto Y."/>
            <person name="Fujita K."/>
            <person name="Isono K."/>
            <person name="Choi S."/>
            <person name="Ohtsubo E."/>
            <person name="Baba T."/>
            <person name="Wanner B.L."/>
            <person name="Mori H."/>
            <person name="Horiuchi T."/>
        </authorList>
    </citation>
    <scope>NUCLEOTIDE SEQUENCE [LARGE SCALE GENOMIC DNA]</scope>
    <source>
        <strain>K12 / W3110 / ATCC 27325 / DSM 5911</strain>
    </source>
</reference>
<reference key="3">
    <citation type="journal article" date="2016" name="MBio">
        <title>A diguanylate cyclase acts as a cell division inhibitor in a two-step response to reductive and envelope stresses.</title>
        <authorList>
            <person name="Kim H.K."/>
            <person name="Harshey R.M."/>
        </authorList>
    </citation>
    <scope>FUNCTION</scope>
    <scope>ACTIVITY REGULATION</scope>
</reference>
<feature type="signal peptide" evidence="1">
    <location>
        <begin position="1"/>
        <end position="22"/>
    </location>
</feature>
<feature type="chain" id="PRO_0000013892" description="Protein YfiR">
    <location>
        <begin position="23"/>
        <end position="172"/>
    </location>
</feature>
<dbReference type="EMBL" id="U00096">
    <property type="protein sequence ID" value="AAC75652.1"/>
    <property type="molecule type" value="Genomic_DNA"/>
</dbReference>
<dbReference type="EMBL" id="AP009048">
    <property type="protein sequence ID" value="BAE76756.1"/>
    <property type="molecule type" value="Genomic_DNA"/>
</dbReference>
<dbReference type="PIR" id="F65038">
    <property type="entry name" value="F65038"/>
</dbReference>
<dbReference type="RefSeq" id="NP_417094.1">
    <property type="nucleotide sequence ID" value="NC_000913.3"/>
</dbReference>
<dbReference type="RefSeq" id="WP_001212391.1">
    <property type="nucleotide sequence ID" value="NZ_STEB01000040.1"/>
</dbReference>
<dbReference type="SMR" id="P64548"/>
<dbReference type="BioGRID" id="4260612">
    <property type="interactions" value="11"/>
</dbReference>
<dbReference type="FunCoup" id="P64548">
    <property type="interactions" value="52"/>
</dbReference>
<dbReference type="IntAct" id="P64548">
    <property type="interactions" value="2"/>
</dbReference>
<dbReference type="STRING" id="511145.b2603"/>
<dbReference type="PaxDb" id="511145-b2603"/>
<dbReference type="EnsemblBacteria" id="AAC75652">
    <property type="protein sequence ID" value="AAC75652"/>
    <property type="gene ID" value="b2603"/>
</dbReference>
<dbReference type="GeneID" id="947090"/>
<dbReference type="KEGG" id="ecj:JW2584"/>
<dbReference type="KEGG" id="eco:b2603"/>
<dbReference type="KEGG" id="ecoc:C3026_14415"/>
<dbReference type="PATRIC" id="fig|1411691.4.peg.4136"/>
<dbReference type="EchoBASE" id="EB3977"/>
<dbReference type="eggNOG" id="ENOG5032MZ8">
    <property type="taxonomic scope" value="Bacteria"/>
</dbReference>
<dbReference type="HOGENOM" id="CLU_102469_1_0_6"/>
<dbReference type="InParanoid" id="P64548"/>
<dbReference type="OMA" id="LSYARWP"/>
<dbReference type="OrthoDB" id="7355447at2"/>
<dbReference type="PhylomeDB" id="P64548"/>
<dbReference type="BioCyc" id="EcoCyc:G7354-MONOMER"/>
<dbReference type="PRO" id="PR:P64548"/>
<dbReference type="Proteomes" id="UP000000625">
    <property type="component" value="Chromosome"/>
</dbReference>
<dbReference type="GO" id="GO:0042597">
    <property type="term" value="C:periplasmic space"/>
    <property type="evidence" value="ECO:0007669"/>
    <property type="project" value="UniProtKB-SubCell"/>
</dbReference>
<dbReference type="GO" id="GO:0071978">
    <property type="term" value="P:bacterial-type flagellum-dependent swarming motility"/>
    <property type="evidence" value="ECO:0000315"/>
    <property type="project" value="EcoCyc"/>
</dbReference>
<dbReference type="InterPro" id="IPR025293">
    <property type="entry name" value="YfiR/HmsC-like"/>
</dbReference>
<dbReference type="Pfam" id="PF13689">
    <property type="entry name" value="DUF4154"/>
    <property type="match status" value="1"/>
</dbReference>
<accession>P64548</accession>
<accession>P76597</accession>
<accession>Q2MAF0</accession>
<protein>
    <recommendedName>
        <fullName evidence="3">Protein YfiR</fullName>
    </recommendedName>
</protein>
<name>YFIR_ECOLI</name>
<comment type="function">
    <text evidence="2">Repressor of the cell division arrest function of DgcN. Prevents DgcN relocation to the midcell.</text>
</comment>
<comment type="activity regulation">
    <text evidence="2">Inactivated by reductive stress.</text>
</comment>
<comment type="subcellular location">
    <subcellularLocation>
        <location evidence="3">Periplasm</location>
    </subcellularLocation>
</comment>
<evidence type="ECO:0000255" key="1"/>
<evidence type="ECO:0000269" key="2">
    <source>
    </source>
</evidence>
<evidence type="ECO:0000305" key="3"/>
<organism>
    <name type="scientific">Escherichia coli (strain K12)</name>
    <dbReference type="NCBI Taxonomy" id="83333"/>
    <lineage>
        <taxon>Bacteria</taxon>
        <taxon>Pseudomonadati</taxon>
        <taxon>Pseudomonadota</taxon>
        <taxon>Gammaproteobacteria</taxon>
        <taxon>Enterobacterales</taxon>
        <taxon>Enterobacteriaceae</taxon>
        <taxon>Escherichia</taxon>
    </lineage>
</organism>
<sequence>MRFSHRLFLLLILLLTGAPILAQEPSDVAKNVRMMVSGIVSYTRWPALSGPPKLCIFSSSRFSTALQENAATSLPYLPVIIHTQQEAMISGCNGFYFGNESPTFQMELTEQYPSKALLLIAEQNTECIIGSAFCLIIHNNDVRFAVNLDALSRSGVKVNPDVLMLARKKNDG</sequence>
<keyword id="KW-0574">Periplasm</keyword>
<keyword id="KW-1185">Reference proteome</keyword>
<keyword id="KW-0732">Signal</keyword>
<gene>
    <name type="primary">yfiR</name>
    <name type="ordered locus">b2603</name>
    <name type="ordered locus">JW2584</name>
</gene>
<proteinExistence type="inferred from homology"/>